<organism>
    <name type="scientific">Chlorobium luteolum (strain DSM 273 / BCRC 81028 / 2530)</name>
    <name type="common">Pelodictyon luteolum</name>
    <dbReference type="NCBI Taxonomy" id="319225"/>
    <lineage>
        <taxon>Bacteria</taxon>
        <taxon>Pseudomonadati</taxon>
        <taxon>Chlorobiota</taxon>
        <taxon>Chlorobiia</taxon>
        <taxon>Chlorobiales</taxon>
        <taxon>Chlorobiaceae</taxon>
        <taxon>Chlorobium/Pelodictyon group</taxon>
        <taxon>Pelodictyon</taxon>
    </lineage>
</organism>
<evidence type="ECO:0000255" key="1">
    <source>
        <dbReference type="HAMAP-Rule" id="MF_00195"/>
    </source>
</evidence>
<name>DER_CHLL3</name>
<keyword id="KW-0342">GTP-binding</keyword>
<keyword id="KW-0547">Nucleotide-binding</keyword>
<keyword id="KW-1185">Reference proteome</keyword>
<keyword id="KW-0677">Repeat</keyword>
<keyword id="KW-0690">Ribosome biogenesis</keyword>
<dbReference type="EMBL" id="CP000096">
    <property type="protein sequence ID" value="ABB23288.1"/>
    <property type="molecule type" value="Genomic_DNA"/>
</dbReference>
<dbReference type="RefSeq" id="WP_011357163.1">
    <property type="nucleotide sequence ID" value="NC_007512.1"/>
</dbReference>
<dbReference type="SMR" id="Q3B5U3"/>
<dbReference type="STRING" id="319225.Plut_0400"/>
<dbReference type="KEGG" id="plt:Plut_0400"/>
<dbReference type="eggNOG" id="COG1160">
    <property type="taxonomic scope" value="Bacteria"/>
</dbReference>
<dbReference type="HOGENOM" id="CLU_016077_6_2_10"/>
<dbReference type="OrthoDB" id="9805918at2"/>
<dbReference type="Proteomes" id="UP000002709">
    <property type="component" value="Chromosome"/>
</dbReference>
<dbReference type="GO" id="GO:0005525">
    <property type="term" value="F:GTP binding"/>
    <property type="evidence" value="ECO:0007669"/>
    <property type="project" value="UniProtKB-UniRule"/>
</dbReference>
<dbReference type="GO" id="GO:0043022">
    <property type="term" value="F:ribosome binding"/>
    <property type="evidence" value="ECO:0007669"/>
    <property type="project" value="TreeGrafter"/>
</dbReference>
<dbReference type="GO" id="GO:0042254">
    <property type="term" value="P:ribosome biogenesis"/>
    <property type="evidence" value="ECO:0007669"/>
    <property type="project" value="UniProtKB-KW"/>
</dbReference>
<dbReference type="CDD" id="cd01894">
    <property type="entry name" value="EngA1"/>
    <property type="match status" value="1"/>
</dbReference>
<dbReference type="CDD" id="cd01895">
    <property type="entry name" value="EngA2"/>
    <property type="match status" value="1"/>
</dbReference>
<dbReference type="FunFam" id="3.30.300.20:FF:000004">
    <property type="entry name" value="GTPase Der"/>
    <property type="match status" value="1"/>
</dbReference>
<dbReference type="FunFam" id="3.40.50.300:FF:000040">
    <property type="entry name" value="GTPase Der"/>
    <property type="match status" value="1"/>
</dbReference>
<dbReference type="Gene3D" id="3.30.300.20">
    <property type="match status" value="1"/>
</dbReference>
<dbReference type="Gene3D" id="3.40.50.300">
    <property type="entry name" value="P-loop containing nucleotide triphosphate hydrolases"/>
    <property type="match status" value="2"/>
</dbReference>
<dbReference type="HAMAP" id="MF_00195">
    <property type="entry name" value="GTPase_Der"/>
    <property type="match status" value="1"/>
</dbReference>
<dbReference type="InterPro" id="IPR031166">
    <property type="entry name" value="G_ENGA"/>
</dbReference>
<dbReference type="InterPro" id="IPR006073">
    <property type="entry name" value="GTP-bd"/>
</dbReference>
<dbReference type="InterPro" id="IPR016484">
    <property type="entry name" value="GTPase_Der"/>
</dbReference>
<dbReference type="InterPro" id="IPR032859">
    <property type="entry name" value="KH_dom-like"/>
</dbReference>
<dbReference type="InterPro" id="IPR015946">
    <property type="entry name" value="KH_dom-like_a/b"/>
</dbReference>
<dbReference type="InterPro" id="IPR027417">
    <property type="entry name" value="P-loop_NTPase"/>
</dbReference>
<dbReference type="InterPro" id="IPR005225">
    <property type="entry name" value="Small_GTP-bd"/>
</dbReference>
<dbReference type="NCBIfam" id="TIGR03594">
    <property type="entry name" value="GTPase_EngA"/>
    <property type="match status" value="1"/>
</dbReference>
<dbReference type="NCBIfam" id="TIGR00231">
    <property type="entry name" value="small_GTP"/>
    <property type="match status" value="2"/>
</dbReference>
<dbReference type="PANTHER" id="PTHR43834">
    <property type="entry name" value="GTPASE DER"/>
    <property type="match status" value="1"/>
</dbReference>
<dbReference type="PANTHER" id="PTHR43834:SF6">
    <property type="entry name" value="GTPASE DER"/>
    <property type="match status" value="1"/>
</dbReference>
<dbReference type="Pfam" id="PF14714">
    <property type="entry name" value="KH_dom-like"/>
    <property type="match status" value="1"/>
</dbReference>
<dbReference type="Pfam" id="PF01926">
    <property type="entry name" value="MMR_HSR1"/>
    <property type="match status" value="2"/>
</dbReference>
<dbReference type="PIRSF" id="PIRSF006485">
    <property type="entry name" value="GTP-binding_EngA"/>
    <property type="match status" value="1"/>
</dbReference>
<dbReference type="PRINTS" id="PR00326">
    <property type="entry name" value="GTP1OBG"/>
</dbReference>
<dbReference type="SUPFAM" id="SSF52540">
    <property type="entry name" value="P-loop containing nucleoside triphosphate hydrolases"/>
    <property type="match status" value="2"/>
</dbReference>
<dbReference type="PROSITE" id="PS51712">
    <property type="entry name" value="G_ENGA"/>
    <property type="match status" value="2"/>
</dbReference>
<accession>Q3B5U3</accession>
<feature type="chain" id="PRO_1000011686" description="GTPase Der">
    <location>
        <begin position="1"/>
        <end position="436"/>
    </location>
</feature>
<feature type="domain" description="EngA-type G 1">
    <location>
        <begin position="3"/>
        <end position="168"/>
    </location>
</feature>
<feature type="domain" description="EngA-type G 2">
    <location>
        <begin position="177"/>
        <end position="352"/>
    </location>
</feature>
<feature type="domain" description="KH-like" evidence="1">
    <location>
        <begin position="353"/>
        <end position="436"/>
    </location>
</feature>
<feature type="binding site" evidence="1">
    <location>
        <begin position="9"/>
        <end position="16"/>
    </location>
    <ligand>
        <name>GTP</name>
        <dbReference type="ChEBI" id="CHEBI:37565"/>
        <label>1</label>
    </ligand>
</feature>
<feature type="binding site" evidence="1">
    <location>
        <begin position="56"/>
        <end position="60"/>
    </location>
    <ligand>
        <name>GTP</name>
        <dbReference type="ChEBI" id="CHEBI:37565"/>
        <label>1</label>
    </ligand>
</feature>
<feature type="binding site" evidence="1">
    <location>
        <begin position="120"/>
        <end position="123"/>
    </location>
    <ligand>
        <name>GTP</name>
        <dbReference type="ChEBI" id="CHEBI:37565"/>
        <label>1</label>
    </ligand>
</feature>
<feature type="binding site" evidence="1">
    <location>
        <begin position="183"/>
        <end position="190"/>
    </location>
    <ligand>
        <name>GTP</name>
        <dbReference type="ChEBI" id="CHEBI:37565"/>
        <label>2</label>
    </ligand>
</feature>
<feature type="binding site" evidence="1">
    <location>
        <begin position="230"/>
        <end position="234"/>
    </location>
    <ligand>
        <name>GTP</name>
        <dbReference type="ChEBI" id="CHEBI:37565"/>
        <label>2</label>
    </ligand>
</feature>
<feature type="binding site" evidence="1">
    <location>
        <begin position="295"/>
        <end position="298"/>
    </location>
    <ligand>
        <name>GTP</name>
        <dbReference type="ChEBI" id="CHEBI:37565"/>
        <label>2</label>
    </ligand>
</feature>
<comment type="function">
    <text evidence="1">GTPase that plays an essential role in the late steps of ribosome biogenesis.</text>
</comment>
<comment type="subunit">
    <text evidence="1">Associates with the 50S ribosomal subunit.</text>
</comment>
<comment type="similarity">
    <text evidence="1">Belongs to the TRAFAC class TrmE-Era-EngA-EngB-Septin-like GTPase superfamily. EngA (Der) GTPase family.</text>
</comment>
<reference key="1">
    <citation type="submission" date="2005-08" db="EMBL/GenBank/DDBJ databases">
        <title>Complete sequence of Pelodictyon luteolum DSM 273.</title>
        <authorList>
            <consortium name="US DOE Joint Genome Institute"/>
            <person name="Copeland A."/>
            <person name="Lucas S."/>
            <person name="Lapidus A."/>
            <person name="Barry K."/>
            <person name="Detter J.C."/>
            <person name="Glavina T."/>
            <person name="Hammon N."/>
            <person name="Israni S."/>
            <person name="Pitluck S."/>
            <person name="Bryant D."/>
            <person name="Schmutz J."/>
            <person name="Larimer F."/>
            <person name="Land M."/>
            <person name="Kyrpides N."/>
            <person name="Ivanova N."/>
            <person name="Richardson P."/>
        </authorList>
    </citation>
    <scope>NUCLEOTIDE SEQUENCE [LARGE SCALE GENOMIC DNA]</scope>
    <source>
        <strain>DSM 273 / BCRC 81028 / 2530</strain>
    </source>
</reference>
<protein>
    <recommendedName>
        <fullName evidence="1">GTPase Der</fullName>
    </recommendedName>
    <alternativeName>
        <fullName evidence="1">GTP-binding protein EngA</fullName>
    </alternativeName>
</protein>
<proteinExistence type="inferred from homology"/>
<gene>
    <name evidence="1" type="primary">der</name>
    <name type="synonym">engA</name>
    <name type="ordered locus">Plut_0400</name>
</gene>
<sequence length="436" mass="48761">MKPLIALVGRPNVGKSTLFNRILREKAAIVDPTPGVTRDRHIAEGHWQGREFRLMDTGGYAPEDGVISTAMLEQTMMAIQDADIIIFLADVRSGVSYDDLELAKILKRDFSDKPIFLAVNKAESPQLAIEAASFVSTGFTEPWAISARDGSGVADLLDEILLTFPESDGPPEEDGAIRLAVIGRPNVGKSSFVNALLGSNRQIVSSIPGTTRDAIDTRFTRKQQEFMLIDTAGLRKRTKISAGIEYYSSLRSERAIERCEVAIVMLDATPGIEKQDLKIINIAAERKRGVLLLVNKWDLVEKDSKTSKQYEESLRSHMGNLSYIPVIFTSALTKKNLYRAIDTAKEISQNRSRKISTSALNRFLEEALAANHPSTRTGKELKIKYMTQIEAPWPVFAFFCNNPELVQTNFRKFLENKLREKFSLEGVTISLRFMQK</sequence>